<gene>
    <name evidence="5" type="primary">FPY5</name>
    <name type="ORF">FMAN_00004</name>
</gene>
<reference key="1">
    <citation type="journal article" date="2016" name="Genome Biol. Evol.">
        <title>Comparative 'omics' of the Fusarium fujikuroi species complex highlights differences in genetic potential and metabolite synthesis.</title>
        <authorList>
            <person name="Niehaus E.-M."/>
            <person name="Muensterkoetter M."/>
            <person name="Proctor R.H."/>
            <person name="Brown D.W."/>
            <person name="Sharon A."/>
            <person name="Idan Y."/>
            <person name="Oren-Young L."/>
            <person name="Sieber C.M."/>
            <person name="Novak O."/>
            <person name="Pencik A."/>
            <person name="Tarkowska D."/>
            <person name="Hromadova K."/>
            <person name="Freeman S."/>
            <person name="Maymon M."/>
            <person name="Elazar M."/>
            <person name="Youssef S.A."/>
            <person name="El-Shabrawy E.S.M."/>
            <person name="Shalaby A.B.A."/>
            <person name="Houterman P."/>
            <person name="Brock N.L."/>
            <person name="Burkhardt I."/>
            <person name="Tsavkelova E.A."/>
            <person name="Dickschat J.S."/>
            <person name="Galuszka P."/>
            <person name="Gueldener U."/>
            <person name="Tudzynski B."/>
        </authorList>
    </citation>
    <scope>NUCLEOTIDE SEQUENCE [LARGE SCALE GENOMIC DNA]</scope>
    <source>
        <strain>MRC7560</strain>
    </source>
</reference>
<reference key="2">
    <citation type="journal article" date="2021" name="Front. Fungal Biol.">
        <title>Biosynthesis of fusapyrone depends on the H3K9 methyltransferase, FmKmt1, in Fusarium mangiferae.</title>
        <authorList>
            <person name="Atanasoff-Kardjalieff A.K."/>
            <person name="Luenne F."/>
            <person name="Kalinina S."/>
            <person name="Strauss J."/>
            <person name="Humpf H.U."/>
            <person name="Studt-Reinhold L."/>
        </authorList>
    </citation>
    <scope>FUNCTION</scope>
    <scope>INDUCTION</scope>
</reference>
<evidence type="ECO:0000255" key="1"/>
<evidence type="ECO:0000255" key="2">
    <source>
        <dbReference type="PROSITE-ProRule" id="PRU00498"/>
    </source>
</evidence>
<evidence type="ECO:0000256" key="3">
    <source>
        <dbReference type="SAM" id="MobiDB-lite"/>
    </source>
</evidence>
<evidence type="ECO:0000269" key="4">
    <source ref="2"/>
</evidence>
<evidence type="ECO:0000303" key="5">
    <source ref="2"/>
</evidence>
<evidence type="ECO:0000305" key="6"/>
<evidence type="ECO:0000305" key="7">
    <source ref="2"/>
</evidence>
<accession>A0A1L7TV54</accession>
<protein>
    <recommendedName>
        <fullName evidence="5">MFS-type transporter FPY5</fullName>
    </recommendedName>
    <alternativeName>
        <fullName evidence="5">Fusapyrone biosynthesis cluster protein 5</fullName>
    </alternativeName>
</protein>
<dbReference type="EMBL" id="FCQH01000013">
    <property type="protein sequence ID" value="CVL02468.1"/>
    <property type="molecule type" value="Genomic_DNA"/>
</dbReference>
<dbReference type="SMR" id="A0A1L7TV54"/>
<dbReference type="VEuPathDB" id="FungiDB:FMAN_00004"/>
<dbReference type="Proteomes" id="UP000184255">
    <property type="component" value="Unassembled WGS sequence"/>
</dbReference>
<dbReference type="GO" id="GO:0005886">
    <property type="term" value="C:plasma membrane"/>
    <property type="evidence" value="ECO:0007669"/>
    <property type="project" value="TreeGrafter"/>
</dbReference>
<dbReference type="GO" id="GO:0022857">
    <property type="term" value="F:transmembrane transporter activity"/>
    <property type="evidence" value="ECO:0007669"/>
    <property type="project" value="InterPro"/>
</dbReference>
<dbReference type="Gene3D" id="1.20.1720.10">
    <property type="entry name" value="Multidrug resistance protein D"/>
    <property type="match status" value="1"/>
</dbReference>
<dbReference type="InterPro" id="IPR011701">
    <property type="entry name" value="MFS"/>
</dbReference>
<dbReference type="InterPro" id="IPR020846">
    <property type="entry name" value="MFS_dom"/>
</dbReference>
<dbReference type="InterPro" id="IPR036259">
    <property type="entry name" value="MFS_trans_sf"/>
</dbReference>
<dbReference type="PANTHER" id="PTHR23501">
    <property type="entry name" value="MAJOR FACILITATOR SUPERFAMILY"/>
    <property type="match status" value="1"/>
</dbReference>
<dbReference type="PANTHER" id="PTHR23501:SF43">
    <property type="entry name" value="MULTIDRUG TRANSPORTER, PUTATIVE (AFU_ORTHOLOGUE AFUA_6G03040)-RELATED"/>
    <property type="match status" value="1"/>
</dbReference>
<dbReference type="Pfam" id="PF07690">
    <property type="entry name" value="MFS_1"/>
    <property type="match status" value="1"/>
</dbReference>
<dbReference type="SUPFAM" id="SSF103473">
    <property type="entry name" value="MFS general substrate transporter"/>
    <property type="match status" value="1"/>
</dbReference>
<dbReference type="PROSITE" id="PS50850">
    <property type="entry name" value="MFS"/>
    <property type="match status" value="1"/>
</dbReference>
<keyword id="KW-0325">Glycoprotein</keyword>
<keyword id="KW-0472">Membrane</keyword>
<keyword id="KW-0812">Transmembrane</keyword>
<keyword id="KW-1133">Transmembrane helix</keyword>
<keyword id="KW-0813">Transport</keyword>
<name>FPY5_FUSMA</name>
<sequence>MSETTGLPLKHLQGSPPGTPVNTNNESNEASPDDGCRLPDTVTEAEASSDNHGSVLGDNNRNVEVAVGASDNATKQKVYHTGWRLHALTSALCLSLLLSTLETTIVSTALVSIVDALHGFNMAGWIVTSYLVTYTGFLIIYSKLSDIFGCKLMLLLAITIFTVFSMACGASDSMVPLIVFRAFQGMGGSGIYSLSTIMVPLMVPPEKYATYISIMSSTFILSSVLGPILGGAITDHTTWRWVFYFNGPGGALAAVLLAFSVPFNFPYGESDRFFHSLASKQMWKRVDFVGMTVSLAASILIIFALEQGGVAYPWGSGAIVSTFVLSGVLWIAFIAWERLLSKRDGVREPMFPWSLVHNRFVMGLLLNGFFTGFPFMAALINIPQRFQTVNMTSAINAGIRTLPLLLLSPLATAINGILVSKLRVPPLYTLFLGGSLQTIGVGLYSSLKSSTSIASAQYGYEAIMGLGFGFNLSTILMMVPLVVTEKDLAVTMGSVTQIRVLGGTIGLAVCSALLINHIKREAVKFLTAEQVAQILLSSENIGMLSIETQSRTRVLYADAYSEQMRVMLYFSIASILSLVLLVERQPRKAPAKPERAG</sequence>
<organism>
    <name type="scientific">Fusarium mangiferae</name>
    <name type="common">Mango malformation disease fungus</name>
    <dbReference type="NCBI Taxonomy" id="192010"/>
    <lineage>
        <taxon>Eukaryota</taxon>
        <taxon>Fungi</taxon>
        <taxon>Dikarya</taxon>
        <taxon>Ascomycota</taxon>
        <taxon>Pezizomycotina</taxon>
        <taxon>Sordariomycetes</taxon>
        <taxon>Hypocreomycetidae</taxon>
        <taxon>Hypocreales</taxon>
        <taxon>Nectriaceae</taxon>
        <taxon>Fusarium</taxon>
        <taxon>Fusarium fujikuroi species complex</taxon>
    </lineage>
</organism>
<feature type="chain" id="PRO_0000458178" description="MFS-type transporter FPY5">
    <location>
        <begin position="1"/>
        <end position="597"/>
    </location>
</feature>
<feature type="transmembrane region" description="Helical" evidence="1">
    <location>
        <begin position="94"/>
        <end position="114"/>
    </location>
</feature>
<feature type="transmembrane region" description="Helical" evidence="1">
    <location>
        <begin position="120"/>
        <end position="140"/>
    </location>
</feature>
<feature type="transmembrane region" description="Helical" evidence="1">
    <location>
        <begin position="147"/>
        <end position="167"/>
    </location>
</feature>
<feature type="transmembrane region" description="Helical" evidence="1">
    <location>
        <begin position="183"/>
        <end position="203"/>
    </location>
</feature>
<feature type="transmembrane region" description="Helical" evidence="1">
    <location>
        <begin position="214"/>
        <end position="234"/>
    </location>
</feature>
<feature type="transmembrane region" description="Helical" evidence="1">
    <location>
        <begin position="241"/>
        <end position="261"/>
    </location>
</feature>
<feature type="transmembrane region" description="Helical" evidence="1">
    <location>
        <begin position="286"/>
        <end position="306"/>
    </location>
</feature>
<feature type="transmembrane region" description="Helical" evidence="1">
    <location>
        <begin position="316"/>
        <end position="336"/>
    </location>
</feature>
<feature type="transmembrane region" description="Helical" evidence="1">
    <location>
        <begin position="360"/>
        <end position="380"/>
    </location>
</feature>
<feature type="transmembrane region" description="Helical" evidence="1">
    <location>
        <begin position="402"/>
        <end position="422"/>
    </location>
</feature>
<feature type="transmembrane region" description="Helical" evidence="1">
    <location>
        <begin position="424"/>
        <end position="444"/>
    </location>
</feature>
<feature type="transmembrane region" description="Helical" evidence="1">
    <location>
        <begin position="463"/>
        <end position="483"/>
    </location>
</feature>
<feature type="transmembrane region" description="Helical" evidence="1">
    <location>
        <begin position="498"/>
        <end position="518"/>
    </location>
</feature>
<feature type="transmembrane region" description="Helical" evidence="1">
    <location>
        <begin position="562"/>
        <end position="582"/>
    </location>
</feature>
<feature type="region of interest" description="Disordered" evidence="3">
    <location>
        <begin position="1"/>
        <end position="55"/>
    </location>
</feature>
<feature type="compositionally biased region" description="Polar residues" evidence="3">
    <location>
        <begin position="20"/>
        <end position="30"/>
    </location>
</feature>
<feature type="compositionally biased region" description="Polar residues" evidence="3">
    <location>
        <begin position="46"/>
        <end position="55"/>
    </location>
</feature>
<feature type="glycosylation site" description="N-linked (GlcNAc...) asparagine" evidence="2">
    <location>
        <position position="25"/>
    </location>
</feature>
<feature type="glycosylation site" description="N-linked (GlcNAc...) asparagine" evidence="2">
    <location>
        <position position="72"/>
    </location>
</feature>
<feature type="glycosylation site" description="N-linked (GlcNAc...) asparagine" evidence="2">
    <location>
        <position position="390"/>
    </location>
</feature>
<proteinExistence type="evidence at transcript level"/>
<comment type="function">
    <text evidence="4">MFS-type transporter; part of the gene cluster that mediates the biosynthesis of the gamma-pyrones fusapyrone (FPY) and deoxyfusapyrone (dFPY).</text>
</comment>
<comment type="pathway">
    <text evidence="7">Secondary metabolite biosynthesis.</text>
</comment>
<comment type="subcellular location">
    <subcellularLocation>
        <location evidence="1">Membrane</location>
        <topology evidence="1">Multi-pass membrane protein</topology>
    </subcellularLocation>
</comment>
<comment type="induction">
    <text evidence="4">Expression is induced in the presence of 6mM glutamine.</text>
</comment>
<comment type="similarity">
    <text evidence="6">Belongs to the major facilitator superfamily. TCR/Tet family.</text>
</comment>